<reference key="1">
    <citation type="journal article" date="2003" name="Nature">
        <title>Genome sequence of Bacillus cereus and comparative analysis with Bacillus anthracis.</title>
        <authorList>
            <person name="Ivanova N."/>
            <person name="Sorokin A."/>
            <person name="Anderson I."/>
            <person name="Galleron N."/>
            <person name="Candelon B."/>
            <person name="Kapatral V."/>
            <person name="Bhattacharyya A."/>
            <person name="Reznik G."/>
            <person name="Mikhailova N."/>
            <person name="Lapidus A."/>
            <person name="Chu L."/>
            <person name="Mazur M."/>
            <person name="Goltsman E."/>
            <person name="Larsen N."/>
            <person name="D'Souza M."/>
            <person name="Walunas T."/>
            <person name="Grechkin Y."/>
            <person name="Pusch G."/>
            <person name="Haselkorn R."/>
            <person name="Fonstein M."/>
            <person name="Ehrlich S.D."/>
            <person name="Overbeek R."/>
            <person name="Kyrpides N.C."/>
        </authorList>
    </citation>
    <scope>NUCLEOTIDE SEQUENCE [LARGE SCALE GENOMIC DNA]</scope>
    <source>
        <strain>ATCC 14579 / DSM 31 / CCUG 7414 / JCM 2152 / NBRC 15305 / NCIMB 9373 / NCTC 2599 / NRRL B-3711</strain>
    </source>
</reference>
<comment type="catalytic activity">
    <reaction>
        <text>Hydrolyzes Xaa-Pro-|- bonds to release unblocked, N-terminal dipeptides from substrates including Ala-Pro-|-p-nitroanilide and (sequentially) Tyr-Pro-|-Phe-Pro-|-Gly-Pro-|-Ile.</text>
        <dbReference type="EC" id="3.4.14.11"/>
    </reaction>
</comment>
<comment type="similarity">
    <text evidence="2">Belongs to the peptidase S15 family.</text>
</comment>
<gene>
    <name type="ordered locus">BC_2861</name>
</gene>
<dbReference type="EC" id="3.4.14.11"/>
<dbReference type="EMBL" id="AE016877">
    <property type="protein sequence ID" value="AAP09811.1"/>
    <property type="molecule type" value="Genomic_DNA"/>
</dbReference>
<dbReference type="RefSeq" id="NP_832610.1">
    <property type="nucleotide sequence ID" value="NC_004722.1"/>
</dbReference>
<dbReference type="RefSeq" id="WP_000038298.1">
    <property type="nucleotide sequence ID" value="NC_004722.1"/>
</dbReference>
<dbReference type="SMR" id="Q81CB2"/>
<dbReference type="STRING" id="226900.BC_2861"/>
<dbReference type="ESTHER" id="baccr-pepx">
    <property type="family name" value="Lactobacillus_peptidase"/>
</dbReference>
<dbReference type="MEROPS" id="S13.003"/>
<dbReference type="KEGG" id="bce:BC2861"/>
<dbReference type="PATRIC" id="fig|226900.8.peg.2923"/>
<dbReference type="HOGENOM" id="CLU_011800_1_0_9"/>
<dbReference type="Proteomes" id="UP000001417">
    <property type="component" value="Chromosome"/>
</dbReference>
<dbReference type="GO" id="GO:0004177">
    <property type="term" value="F:aminopeptidase activity"/>
    <property type="evidence" value="ECO:0007669"/>
    <property type="project" value="UniProtKB-KW"/>
</dbReference>
<dbReference type="GO" id="GO:0008239">
    <property type="term" value="F:dipeptidyl-peptidase activity"/>
    <property type="evidence" value="ECO:0007669"/>
    <property type="project" value="UniProtKB-EC"/>
</dbReference>
<dbReference type="GO" id="GO:0008236">
    <property type="term" value="F:serine-type peptidase activity"/>
    <property type="evidence" value="ECO:0007669"/>
    <property type="project" value="UniProtKB-KW"/>
</dbReference>
<dbReference type="GO" id="GO:0006508">
    <property type="term" value="P:proteolysis"/>
    <property type="evidence" value="ECO:0007669"/>
    <property type="project" value="UniProtKB-KW"/>
</dbReference>
<dbReference type="Gene3D" id="3.40.50.1820">
    <property type="entry name" value="alpha/beta hydrolase"/>
    <property type="match status" value="1"/>
</dbReference>
<dbReference type="Gene3D" id="2.60.120.260">
    <property type="entry name" value="Galactose-binding domain-like"/>
    <property type="match status" value="1"/>
</dbReference>
<dbReference type="InterPro" id="IPR029058">
    <property type="entry name" value="AB_hydrolase_fold"/>
</dbReference>
<dbReference type="InterPro" id="IPR008979">
    <property type="entry name" value="Galactose-bd-like_sf"/>
</dbReference>
<dbReference type="InterPro" id="IPR008252">
    <property type="entry name" value="Pept_S15_Xpro"/>
</dbReference>
<dbReference type="InterPro" id="IPR000383">
    <property type="entry name" value="Xaa-Pro-like_dom"/>
</dbReference>
<dbReference type="InterPro" id="IPR013736">
    <property type="entry name" value="Xaa-Pro_dipept_C"/>
</dbReference>
<dbReference type="NCBIfam" id="NF003780">
    <property type="entry name" value="PRK05371.1-1"/>
    <property type="match status" value="1"/>
</dbReference>
<dbReference type="Pfam" id="PF02129">
    <property type="entry name" value="Peptidase_S15"/>
    <property type="match status" value="1"/>
</dbReference>
<dbReference type="Pfam" id="PF08530">
    <property type="entry name" value="PepX_C"/>
    <property type="match status" value="1"/>
</dbReference>
<dbReference type="PRINTS" id="PR00923">
    <property type="entry name" value="LACTOPTASE"/>
</dbReference>
<dbReference type="SMART" id="SM00939">
    <property type="entry name" value="PepX_C"/>
    <property type="match status" value="1"/>
</dbReference>
<dbReference type="SUPFAM" id="SSF53474">
    <property type="entry name" value="alpha/beta-Hydrolases"/>
    <property type="match status" value="1"/>
</dbReference>
<dbReference type="SUPFAM" id="SSF49785">
    <property type="entry name" value="Galactose-binding domain-like"/>
    <property type="match status" value="1"/>
</dbReference>
<evidence type="ECO:0000250" key="1"/>
<evidence type="ECO:0000305" key="2"/>
<organism>
    <name type="scientific">Bacillus cereus (strain ATCC 14579 / DSM 31 / CCUG 7414 / JCM 2152 / NBRC 15305 / NCIMB 9373 / NCTC 2599 / NRRL B-3711)</name>
    <dbReference type="NCBI Taxonomy" id="226900"/>
    <lineage>
        <taxon>Bacteria</taxon>
        <taxon>Bacillati</taxon>
        <taxon>Bacillota</taxon>
        <taxon>Bacilli</taxon>
        <taxon>Bacillales</taxon>
        <taxon>Bacillaceae</taxon>
        <taxon>Bacillus</taxon>
        <taxon>Bacillus cereus group</taxon>
    </lineage>
</organism>
<sequence length="580" mass="64540">MSKKKMAITLSAMLSATIIPSFTMDVHAEKKEETKNTKIELENGMTKPIYSLDEAIMDENLYVETEVDSDQDGKKDRVSIKVMRPKTDPNVKVPVIYEMSPYRSGLKDVPVYNVDEELYAYEGKPYGAINLGSYGNYYVPRGYAVILGESIGTGKSDGCPTTGDEQEILGTKSVIDWVNGRAKAFTEQGEEVQANWSTGNVGMTGVSYNGTLPNAVATTGVEGLKTIIPIAAISSWYDYYRANGAVIAPGGYQGEDTDNMAEAVLTRENPEVCGQVIKELTAGQDRKTGNYNDFWDKRNYVKDAKNVKASVFVVHGLNDWNVKTKQFAQWWEALGENNVPRKMWLHQGGHGGTSSNNWQQTQNKWLDYWLYGIENGIMDEPMVDVQRENKTWQKIKNWPDPAAVPSKIRMYLSNKSVNLPLSMGSANKVFSFLDDAQIKSNQLVANPELEVANRLVYTMPVLQKDTRISGTPKISITGNIDRSVSNLTALLVDYGGAKPEIVTRGWMDPQNVKSIENSTAIQPGKDYTFTWDMQPDDYVFKAGHQIGVVLIASDYDYTIRPKAGTKLTVKLSEVTLPIVK</sequence>
<accession>Q81CB2</accession>
<proteinExistence type="inferred from homology"/>
<name>PEPX_BACCR</name>
<protein>
    <recommendedName>
        <fullName>Putative Xaa-Pro dipeptidyl-peptidase</fullName>
        <shortName>X-Pro dipeptidyl-peptidase</shortName>
        <ecNumber>3.4.14.11</ecNumber>
    </recommendedName>
    <alternativeName>
        <fullName>X-prolyl-dipeptidyl aminopeptidase</fullName>
        <shortName>X-PDAP</shortName>
    </alternativeName>
</protein>
<feature type="chain" id="PRO_0000220237" description="Putative Xaa-Pro dipeptidyl-peptidase">
    <location>
        <begin position="1"/>
        <end position="580"/>
    </location>
</feature>
<feature type="active site" description="Charge relay system" evidence="1">
    <location>
        <position position="207"/>
    </location>
</feature>
<feature type="active site" description="Charge relay system" evidence="1">
    <location>
        <position position="319"/>
    </location>
</feature>
<feature type="active site" description="Charge relay system" evidence="1">
    <location>
        <position position="350"/>
    </location>
</feature>
<keyword id="KW-0031">Aminopeptidase</keyword>
<keyword id="KW-0378">Hydrolase</keyword>
<keyword id="KW-0645">Protease</keyword>
<keyword id="KW-1185">Reference proteome</keyword>
<keyword id="KW-0720">Serine protease</keyword>